<feature type="signal peptide" evidence="1">
    <location>
        <begin position="1"/>
        <end position="35"/>
    </location>
</feature>
<feature type="chain" id="PRO_5000115909" description="N-acetylneuraminate epimerase">
    <location>
        <begin position="36"/>
        <end position="392"/>
    </location>
</feature>
<feature type="repeat" description="Kelch 1">
    <location>
        <begin position="56"/>
        <end position="100"/>
    </location>
</feature>
<feature type="repeat" description="Kelch 2">
    <location>
        <begin position="102"/>
        <end position="155"/>
    </location>
</feature>
<feature type="repeat" description="Kelch 3">
    <location>
        <begin position="157"/>
        <end position="192"/>
    </location>
</feature>
<feature type="repeat" description="Kelch 4">
    <location>
        <begin position="193"/>
        <end position="238"/>
    </location>
</feature>
<feature type="repeat" description="Kelch 5">
    <location>
        <begin position="241"/>
        <end position="290"/>
    </location>
</feature>
<feature type="repeat" description="Kelch 6">
    <location>
        <begin position="312"/>
        <end position="361"/>
    </location>
</feature>
<feature type="repeat" description="Kelch 7">
    <location>
        <begin position="363"/>
        <end position="392"/>
    </location>
</feature>
<feature type="active site" description="Proton acceptor" evidence="1">
    <location>
        <position position="247"/>
    </location>
</feature>
<keyword id="KW-0119">Carbohydrate metabolism</keyword>
<keyword id="KW-0413">Isomerase</keyword>
<keyword id="KW-0880">Kelch repeat</keyword>
<keyword id="KW-0574">Periplasm</keyword>
<keyword id="KW-0677">Repeat</keyword>
<keyword id="KW-0732">Signal</keyword>
<accession>Q1C8L8</accession>
<organism>
    <name type="scientific">Yersinia pestis bv. Antiqua (strain Antiqua)</name>
    <dbReference type="NCBI Taxonomy" id="360102"/>
    <lineage>
        <taxon>Bacteria</taxon>
        <taxon>Pseudomonadati</taxon>
        <taxon>Pseudomonadota</taxon>
        <taxon>Gammaproteobacteria</taxon>
        <taxon>Enterobacterales</taxon>
        <taxon>Yersiniaceae</taxon>
        <taxon>Yersinia</taxon>
    </lineage>
</organism>
<name>NANM_YERPA</name>
<sequence>MTQLYPQYKKQLTTKIVLFSALSLLMMASLPNTYAEQYPDVPVPFKNGTGGKVENSLYVGLGSAGVSWFRLDTDKTGAGWQKVANFPGQPREQAVTVVLAGKLYVFGGVGKTNANDTQVRALDDAYRFDPQTNQWQQLATRAPRGLVGTVATTLDGSQAVLLGGVNKAIFDGYFTDLASAGSDEVRKSAVINAYFNQAPADYFYNRDVLIYDPQKNQWKSGGLLPFLGTAGSAISRMDNRLILINGEIKPGLRTAAVWQGLMQGNVLEWQPQPDLIGAETGSAQEGLAGAFSGISHKTVLVAGGANFPGAWKQFNRGHLYAHQGLEKQWHQQVYALVDNQWRIAGKLPQPLGYGVSIQGPDKVILIGGETTGGTATSAVTQLSWQGGKLHIE</sequence>
<evidence type="ECO:0000255" key="1">
    <source>
        <dbReference type="HAMAP-Rule" id="MF_01195"/>
    </source>
</evidence>
<gene>
    <name evidence="1" type="primary">nanM</name>
    <name type="ordered locus">YPA_1237</name>
</gene>
<reference key="1">
    <citation type="journal article" date="2006" name="J. Bacteriol.">
        <title>Complete genome sequence of Yersinia pestis strains Antiqua and Nepal516: evidence of gene reduction in an emerging pathogen.</title>
        <authorList>
            <person name="Chain P.S.G."/>
            <person name="Hu P."/>
            <person name="Malfatti S.A."/>
            <person name="Radnedge L."/>
            <person name="Larimer F."/>
            <person name="Vergez L.M."/>
            <person name="Worsham P."/>
            <person name="Chu M.C."/>
            <person name="Andersen G.L."/>
        </authorList>
    </citation>
    <scope>NUCLEOTIDE SEQUENCE [LARGE SCALE GENOMIC DNA]</scope>
    <source>
        <strain>Antiqua</strain>
    </source>
</reference>
<dbReference type="EC" id="5.1.3.24" evidence="1"/>
<dbReference type="EMBL" id="CP000308">
    <property type="protein sequence ID" value="ABG13204.1"/>
    <property type="molecule type" value="Genomic_DNA"/>
</dbReference>
<dbReference type="RefSeq" id="WP_002211169.1">
    <property type="nucleotide sequence ID" value="NZ_CP009906.1"/>
</dbReference>
<dbReference type="SMR" id="Q1C8L8"/>
<dbReference type="KEGG" id="ypa:YPA_1237"/>
<dbReference type="Proteomes" id="UP000001971">
    <property type="component" value="Chromosome"/>
</dbReference>
<dbReference type="GO" id="GO:0042597">
    <property type="term" value="C:periplasmic space"/>
    <property type="evidence" value="ECO:0007669"/>
    <property type="project" value="UniProtKB-SubCell"/>
</dbReference>
<dbReference type="GO" id="GO:0016857">
    <property type="term" value="F:racemase and epimerase activity, acting on carbohydrates and derivatives"/>
    <property type="evidence" value="ECO:0007669"/>
    <property type="project" value="UniProtKB-UniRule"/>
</dbReference>
<dbReference type="Gene3D" id="2.120.10.80">
    <property type="entry name" value="Kelch-type beta propeller"/>
    <property type="match status" value="1"/>
</dbReference>
<dbReference type="HAMAP" id="MF_01195">
    <property type="entry name" value="NanM"/>
    <property type="match status" value="1"/>
</dbReference>
<dbReference type="InterPro" id="IPR015915">
    <property type="entry name" value="Kelch-typ_b-propeller"/>
</dbReference>
<dbReference type="InterPro" id="IPR056734">
    <property type="entry name" value="NANM"/>
</dbReference>
<dbReference type="InterPro" id="IPR019936">
    <property type="entry name" value="NanM_proteobact"/>
</dbReference>
<dbReference type="NCBIfam" id="TIGR03547">
    <property type="entry name" value="muta_rot_YjhT"/>
    <property type="match status" value="1"/>
</dbReference>
<dbReference type="NCBIfam" id="NF010730">
    <property type="entry name" value="PRK14131.1"/>
    <property type="match status" value="1"/>
</dbReference>
<dbReference type="PANTHER" id="PTHR24412">
    <property type="entry name" value="KELCH PROTEIN"/>
    <property type="match status" value="1"/>
</dbReference>
<dbReference type="PANTHER" id="PTHR24412:SF441">
    <property type="entry name" value="KELCH-LIKE PROTEIN 28"/>
    <property type="match status" value="1"/>
</dbReference>
<dbReference type="Pfam" id="PF24996">
    <property type="entry name" value="NANM"/>
    <property type="match status" value="1"/>
</dbReference>
<dbReference type="SUPFAM" id="SSF117281">
    <property type="entry name" value="Kelch motif"/>
    <property type="match status" value="1"/>
</dbReference>
<protein>
    <recommendedName>
        <fullName evidence="1">N-acetylneuraminate epimerase</fullName>
        <ecNumber evidence="1">5.1.3.24</ecNumber>
    </recommendedName>
    <alternativeName>
        <fullName evidence="1">N-acetylneuraminate mutarotase</fullName>
        <shortName evidence="1">Neu5Ac mutarotase</shortName>
    </alternativeName>
    <alternativeName>
        <fullName evidence="1">Sialic acid epimerase</fullName>
    </alternativeName>
</protein>
<comment type="function">
    <text evidence="1">Converts alpha-N-acetylneuranimic acid (Neu5Ac) to the beta-anomer, accelerating the equilibrium between the alpha- and beta-anomers. Probably facilitates sialidase-negative bacteria to compete successfully for limited amounts of extracellular Neu5Ac, which is likely taken up in the beta-anomer. In addition, the rapid removal of sialic acid from solution might be advantageous to the bacterium to damp down host responses.</text>
</comment>
<comment type="catalytic activity">
    <reaction evidence="1">
        <text>N-acetyl-alpha-neuraminate = N-acetyl-beta-neuraminate</text>
        <dbReference type="Rhea" id="RHEA:25233"/>
        <dbReference type="ChEBI" id="CHEBI:58705"/>
        <dbReference type="ChEBI" id="CHEBI:58770"/>
        <dbReference type="EC" id="5.1.3.24"/>
    </reaction>
</comment>
<comment type="subunit">
    <text evidence="1">Homodimer.</text>
</comment>
<comment type="subcellular location">
    <subcellularLocation>
        <location evidence="1">Periplasm</location>
    </subcellularLocation>
</comment>
<comment type="similarity">
    <text evidence="1">Belongs to the NanM family.</text>
</comment>
<proteinExistence type="inferred from homology"/>